<feature type="chain" id="PRO_0000108638" description="Ribosomal RNA small subunit methyltransferase H">
    <location>
        <begin position="1"/>
        <end position="308"/>
    </location>
</feature>
<feature type="binding site" evidence="1">
    <location>
        <begin position="36"/>
        <end position="38"/>
    </location>
    <ligand>
        <name>S-adenosyl-L-methionine</name>
        <dbReference type="ChEBI" id="CHEBI:59789"/>
    </ligand>
</feature>
<feature type="binding site" evidence="1">
    <location>
        <position position="55"/>
    </location>
    <ligand>
        <name>S-adenosyl-L-methionine</name>
        <dbReference type="ChEBI" id="CHEBI:59789"/>
    </ligand>
</feature>
<feature type="binding site" evidence="1">
    <location>
        <position position="82"/>
    </location>
    <ligand>
        <name>S-adenosyl-L-methionine</name>
        <dbReference type="ChEBI" id="CHEBI:59789"/>
    </ligand>
</feature>
<feature type="binding site" evidence="1">
    <location>
        <position position="103"/>
    </location>
    <ligand>
        <name>S-adenosyl-L-methionine</name>
        <dbReference type="ChEBI" id="CHEBI:59789"/>
    </ligand>
</feature>
<feature type="binding site" evidence="1">
    <location>
        <position position="110"/>
    </location>
    <ligand>
        <name>S-adenosyl-L-methionine</name>
        <dbReference type="ChEBI" id="CHEBI:59789"/>
    </ligand>
</feature>
<name>RSMH_HELPY</name>
<proteinExistence type="inferred from homology"/>
<gene>
    <name evidence="1" type="primary">rsmH</name>
    <name type="synonym">mraW</name>
    <name type="ordered locus">HP_0707</name>
</gene>
<sequence length="308" mass="34977">MQEIESLHQSVLLQEVLQAFMPLEEGVLIDCTLGLGGHSKALLSQKPHLKLIGIDKDKFAQEIAKERLKAFEGRYNLLSGGFAKRFKEALETHNKEIKGVLVDLGVSSLQLDDDNRGFNFHSHTLDMRMDLESELNAQKVINSYPIVALEKIFRDYGEIKEYKKIAHKIAERRAKKPFKNAKDLSEFLSSFSKNKKIHPATLVFQAVRIEVNSELEELKEFLQCARNLKGAILCVISFHSLEDALVKNAFKDYAKNCICDPSSFKCACSNNHALGEILTKKPITPSPEEIKNNRRSRSAKMRVFQFKP</sequence>
<organism>
    <name type="scientific">Helicobacter pylori (strain ATCC 700392 / 26695)</name>
    <name type="common">Campylobacter pylori</name>
    <dbReference type="NCBI Taxonomy" id="85962"/>
    <lineage>
        <taxon>Bacteria</taxon>
        <taxon>Pseudomonadati</taxon>
        <taxon>Campylobacterota</taxon>
        <taxon>Epsilonproteobacteria</taxon>
        <taxon>Campylobacterales</taxon>
        <taxon>Helicobacteraceae</taxon>
        <taxon>Helicobacter</taxon>
    </lineage>
</organism>
<evidence type="ECO:0000255" key="1">
    <source>
        <dbReference type="HAMAP-Rule" id="MF_01007"/>
    </source>
</evidence>
<comment type="function">
    <text evidence="1">Specifically methylates the N4 position of cytidine in position 1402 (C1402) of 16S rRNA.</text>
</comment>
<comment type="catalytic activity">
    <reaction evidence="1">
        <text>cytidine(1402) in 16S rRNA + S-adenosyl-L-methionine = N(4)-methylcytidine(1402) in 16S rRNA + S-adenosyl-L-homocysteine + H(+)</text>
        <dbReference type="Rhea" id="RHEA:42928"/>
        <dbReference type="Rhea" id="RHEA-COMP:10286"/>
        <dbReference type="Rhea" id="RHEA-COMP:10287"/>
        <dbReference type="ChEBI" id="CHEBI:15378"/>
        <dbReference type="ChEBI" id="CHEBI:57856"/>
        <dbReference type="ChEBI" id="CHEBI:59789"/>
        <dbReference type="ChEBI" id="CHEBI:74506"/>
        <dbReference type="ChEBI" id="CHEBI:82748"/>
        <dbReference type="EC" id="2.1.1.199"/>
    </reaction>
</comment>
<comment type="subcellular location">
    <subcellularLocation>
        <location evidence="1">Cytoplasm</location>
    </subcellularLocation>
</comment>
<comment type="similarity">
    <text evidence="1">Belongs to the methyltransferase superfamily. RsmH family.</text>
</comment>
<keyword id="KW-0963">Cytoplasm</keyword>
<keyword id="KW-0489">Methyltransferase</keyword>
<keyword id="KW-1185">Reference proteome</keyword>
<keyword id="KW-0698">rRNA processing</keyword>
<keyword id="KW-0949">S-adenosyl-L-methionine</keyword>
<keyword id="KW-0808">Transferase</keyword>
<protein>
    <recommendedName>
        <fullName evidence="1">Ribosomal RNA small subunit methyltransferase H</fullName>
        <ecNumber evidence="1">2.1.1.199</ecNumber>
    </recommendedName>
    <alternativeName>
        <fullName evidence="1">16S rRNA m(4)C1402 methyltransferase</fullName>
    </alternativeName>
    <alternativeName>
        <fullName evidence="1">rRNA (cytosine-N(4)-)-methyltransferase RsmH</fullName>
    </alternativeName>
</protein>
<accession>O25411</accession>
<dbReference type="EC" id="2.1.1.199" evidence="1"/>
<dbReference type="EMBL" id="AE000511">
    <property type="protein sequence ID" value="AAD07761.1"/>
    <property type="molecule type" value="Genomic_DNA"/>
</dbReference>
<dbReference type="PIR" id="C64608">
    <property type="entry name" value="C64608"/>
</dbReference>
<dbReference type="RefSeq" id="NP_207501.1">
    <property type="nucleotide sequence ID" value="NC_000915.1"/>
</dbReference>
<dbReference type="RefSeq" id="WP_001155571.1">
    <property type="nucleotide sequence ID" value="NC_018939.1"/>
</dbReference>
<dbReference type="SMR" id="O25411"/>
<dbReference type="DIP" id="DIP-3175N"/>
<dbReference type="FunCoup" id="O25411">
    <property type="interactions" value="387"/>
</dbReference>
<dbReference type="IntAct" id="O25411">
    <property type="interactions" value="1"/>
</dbReference>
<dbReference type="MINT" id="O25411"/>
<dbReference type="STRING" id="85962.HP_0707"/>
<dbReference type="PaxDb" id="85962-C694_03640"/>
<dbReference type="EnsemblBacteria" id="AAD07761">
    <property type="protein sequence ID" value="AAD07761"/>
    <property type="gene ID" value="HP_0707"/>
</dbReference>
<dbReference type="KEGG" id="heo:C694_03640"/>
<dbReference type="KEGG" id="hpy:HP_0707"/>
<dbReference type="PATRIC" id="fig|85962.47.peg.756"/>
<dbReference type="eggNOG" id="COG0275">
    <property type="taxonomic scope" value="Bacteria"/>
</dbReference>
<dbReference type="InParanoid" id="O25411"/>
<dbReference type="OrthoDB" id="9806637at2"/>
<dbReference type="PhylomeDB" id="O25411"/>
<dbReference type="Proteomes" id="UP000000429">
    <property type="component" value="Chromosome"/>
</dbReference>
<dbReference type="GO" id="GO:0005737">
    <property type="term" value="C:cytoplasm"/>
    <property type="evidence" value="ECO:0000318"/>
    <property type="project" value="GO_Central"/>
</dbReference>
<dbReference type="GO" id="GO:0071424">
    <property type="term" value="F:rRNA (cytosine-N4-)-methyltransferase activity"/>
    <property type="evidence" value="ECO:0000318"/>
    <property type="project" value="GO_Central"/>
</dbReference>
<dbReference type="GO" id="GO:0070475">
    <property type="term" value="P:rRNA base methylation"/>
    <property type="evidence" value="ECO:0000318"/>
    <property type="project" value="GO_Central"/>
</dbReference>
<dbReference type="FunFam" id="1.10.150.170:FF:000008">
    <property type="entry name" value="Ribosomal RNA small subunit methyltransferase H"/>
    <property type="match status" value="1"/>
</dbReference>
<dbReference type="Gene3D" id="1.10.150.170">
    <property type="entry name" value="Putative methyltransferase TM0872, insert domain"/>
    <property type="match status" value="1"/>
</dbReference>
<dbReference type="Gene3D" id="3.40.50.150">
    <property type="entry name" value="Vaccinia Virus protein VP39"/>
    <property type="match status" value="1"/>
</dbReference>
<dbReference type="HAMAP" id="MF_01007">
    <property type="entry name" value="16SrRNA_methyltr_H"/>
    <property type="match status" value="1"/>
</dbReference>
<dbReference type="InterPro" id="IPR002903">
    <property type="entry name" value="RsmH"/>
</dbReference>
<dbReference type="InterPro" id="IPR023397">
    <property type="entry name" value="SAM-dep_MeTrfase_MraW_recog"/>
</dbReference>
<dbReference type="InterPro" id="IPR029063">
    <property type="entry name" value="SAM-dependent_MTases_sf"/>
</dbReference>
<dbReference type="NCBIfam" id="TIGR00006">
    <property type="entry name" value="16S rRNA (cytosine(1402)-N(4))-methyltransferase RsmH"/>
    <property type="match status" value="1"/>
</dbReference>
<dbReference type="PANTHER" id="PTHR11265:SF0">
    <property type="entry name" value="12S RRNA N4-METHYLCYTIDINE METHYLTRANSFERASE"/>
    <property type="match status" value="1"/>
</dbReference>
<dbReference type="PANTHER" id="PTHR11265">
    <property type="entry name" value="S-ADENOSYL-METHYLTRANSFERASE MRAW"/>
    <property type="match status" value="1"/>
</dbReference>
<dbReference type="Pfam" id="PF01795">
    <property type="entry name" value="Methyltransf_5"/>
    <property type="match status" value="1"/>
</dbReference>
<dbReference type="PIRSF" id="PIRSF004486">
    <property type="entry name" value="MraW"/>
    <property type="match status" value="1"/>
</dbReference>
<dbReference type="SUPFAM" id="SSF81799">
    <property type="entry name" value="Putative methyltransferase TM0872, insert domain"/>
    <property type="match status" value="1"/>
</dbReference>
<dbReference type="SUPFAM" id="SSF53335">
    <property type="entry name" value="S-adenosyl-L-methionine-dependent methyltransferases"/>
    <property type="match status" value="1"/>
</dbReference>
<reference key="1">
    <citation type="journal article" date="1997" name="Nature">
        <title>The complete genome sequence of the gastric pathogen Helicobacter pylori.</title>
        <authorList>
            <person name="Tomb J.-F."/>
            <person name="White O."/>
            <person name="Kerlavage A.R."/>
            <person name="Clayton R.A."/>
            <person name="Sutton G.G."/>
            <person name="Fleischmann R.D."/>
            <person name="Ketchum K.A."/>
            <person name="Klenk H.-P."/>
            <person name="Gill S.R."/>
            <person name="Dougherty B.A."/>
            <person name="Nelson K.E."/>
            <person name="Quackenbush J."/>
            <person name="Zhou L."/>
            <person name="Kirkness E.F."/>
            <person name="Peterson S.N."/>
            <person name="Loftus B.J."/>
            <person name="Richardson D.L."/>
            <person name="Dodson R.J."/>
            <person name="Khalak H.G."/>
            <person name="Glodek A."/>
            <person name="McKenney K."/>
            <person name="FitzGerald L.M."/>
            <person name="Lee N."/>
            <person name="Adams M.D."/>
            <person name="Hickey E.K."/>
            <person name="Berg D.E."/>
            <person name="Gocayne J.D."/>
            <person name="Utterback T.R."/>
            <person name="Peterson J.D."/>
            <person name="Kelley J.M."/>
            <person name="Cotton M.D."/>
            <person name="Weidman J.F."/>
            <person name="Fujii C."/>
            <person name="Bowman C."/>
            <person name="Watthey L."/>
            <person name="Wallin E."/>
            <person name="Hayes W.S."/>
            <person name="Borodovsky M."/>
            <person name="Karp P.D."/>
            <person name="Smith H.O."/>
            <person name="Fraser C.M."/>
            <person name="Venter J.C."/>
        </authorList>
    </citation>
    <scope>NUCLEOTIDE SEQUENCE [LARGE SCALE GENOMIC DNA]</scope>
    <source>
        <strain>ATCC 700392 / 26695</strain>
    </source>
</reference>